<comment type="function">
    <text evidence="1">Catalyzes the decarboxylation of 3-octaprenyl-4-hydroxy benzoate to 2-octaprenylphenol, an intermediate step in ubiquinone biosynthesis.</text>
</comment>
<comment type="catalytic activity">
    <reaction evidence="1">
        <text>a 4-hydroxy-3-(all-trans-polyprenyl)benzoate + H(+) = a 2-(all-trans-polyprenyl)phenol + CO2</text>
        <dbReference type="Rhea" id="RHEA:41680"/>
        <dbReference type="Rhea" id="RHEA-COMP:9514"/>
        <dbReference type="Rhea" id="RHEA-COMP:9516"/>
        <dbReference type="ChEBI" id="CHEBI:1269"/>
        <dbReference type="ChEBI" id="CHEBI:15378"/>
        <dbReference type="ChEBI" id="CHEBI:16526"/>
        <dbReference type="ChEBI" id="CHEBI:78396"/>
        <dbReference type="EC" id="4.1.1.98"/>
    </reaction>
</comment>
<comment type="cofactor">
    <cofactor evidence="1">
        <name>prenylated FMN</name>
        <dbReference type="ChEBI" id="CHEBI:87746"/>
    </cofactor>
    <text evidence="1">Binds 1 prenylated FMN per subunit.</text>
</comment>
<comment type="cofactor">
    <cofactor evidence="1">
        <name>Mn(2+)</name>
        <dbReference type="ChEBI" id="CHEBI:29035"/>
    </cofactor>
</comment>
<comment type="pathway">
    <text evidence="1">Cofactor biosynthesis; ubiquinone biosynthesis.</text>
</comment>
<comment type="subunit">
    <text evidence="1">Homohexamer.</text>
</comment>
<comment type="subcellular location">
    <subcellularLocation>
        <location evidence="1">Cell membrane</location>
        <topology evidence="1">Peripheral membrane protein</topology>
    </subcellularLocation>
</comment>
<comment type="similarity">
    <text evidence="1">Belongs to the UbiD family.</text>
</comment>
<sequence length="514" mass="56767">MKYRDLRDFLAQLERQGELKRITAPVSTRLEMTEIADRVLRAGGPALLFENARHNDAPADMPVLANLFGTPRRVAWGMGADDVGALRETGELLASLREPEAPKGLRDALAKVSMLKAALWDMSPKTVRSAACQEIVWEGADVDLGRLPIQTCWPGDVAPLLAWGLVITRGPNARRQNLGIYRQQPLGPNKLIMRWLSHRGGALDFRDHAQAHPGKPFPIAVALGADPATILGAVTPVPDTLSEYQFAGLLRGSRTEVVKALGSDLSVPASAEIVLEGHLLPADDPRAVAAAVPEGANPPPATGYEMALEGPYGDHTGYYNEQDWFPVFTVDRITMRRNPIYHSTYTGKPPDEPAVLGVALNEVFVPLLRRQLPEIVDFYLPPEGCSYRLAVVSIRKQYAGHAKRVMFGLWSVLRQFMYTKFIVVVDEDIDPRDWTEVVWAMTTRMDPVRDTVLVENTPIDYLDFASPVSGLGGKMGLDATNKWPGETSREWGTPIHMDEAVKRRVDAMWDTLGL</sequence>
<gene>
    <name evidence="1" type="primary">ubiD</name>
    <name type="ordered locus">BB1372</name>
</gene>
<keyword id="KW-1003">Cell membrane</keyword>
<keyword id="KW-0210">Decarboxylase</keyword>
<keyword id="KW-0285">Flavoprotein</keyword>
<keyword id="KW-0288">FMN</keyword>
<keyword id="KW-0456">Lyase</keyword>
<keyword id="KW-0464">Manganese</keyword>
<keyword id="KW-0472">Membrane</keyword>
<keyword id="KW-0479">Metal-binding</keyword>
<keyword id="KW-0831">Ubiquinone biosynthesis</keyword>
<protein>
    <recommendedName>
        <fullName evidence="1">3-octaprenyl-4-hydroxybenzoate carboxy-lyase</fullName>
        <ecNumber evidence="1">4.1.1.98</ecNumber>
    </recommendedName>
    <alternativeName>
        <fullName evidence="1">Polyprenyl p-hydroxybenzoate decarboxylase</fullName>
    </alternativeName>
</protein>
<feature type="chain" id="PRO_0000267649" description="3-octaprenyl-4-hydroxybenzoate carboxy-lyase">
    <location>
        <begin position="1"/>
        <end position="514"/>
    </location>
</feature>
<feature type="active site" description="Proton donor" evidence="1">
    <location>
        <position position="314"/>
    </location>
</feature>
<feature type="binding site" evidence="1">
    <location>
        <position position="177"/>
    </location>
    <ligand>
        <name>Mn(2+)</name>
        <dbReference type="ChEBI" id="CHEBI:29035"/>
    </ligand>
</feature>
<feature type="binding site" evidence="1">
    <location>
        <begin position="180"/>
        <end position="182"/>
    </location>
    <ligand>
        <name>prenylated FMN</name>
        <dbReference type="ChEBI" id="CHEBI:87746"/>
    </ligand>
</feature>
<feature type="binding site" evidence="1">
    <location>
        <begin position="194"/>
        <end position="196"/>
    </location>
    <ligand>
        <name>prenylated FMN</name>
        <dbReference type="ChEBI" id="CHEBI:87746"/>
    </ligand>
</feature>
<feature type="binding site" evidence="1">
    <location>
        <begin position="199"/>
        <end position="200"/>
    </location>
    <ligand>
        <name>prenylated FMN</name>
        <dbReference type="ChEBI" id="CHEBI:87746"/>
    </ligand>
</feature>
<feature type="binding site" evidence="1">
    <location>
        <position position="243"/>
    </location>
    <ligand>
        <name>Mn(2+)</name>
        <dbReference type="ChEBI" id="CHEBI:29035"/>
    </ligand>
</feature>
<organism>
    <name type="scientific">Bordetella bronchiseptica (strain ATCC BAA-588 / NCTC 13252 / RB50)</name>
    <name type="common">Alcaligenes bronchisepticus</name>
    <dbReference type="NCBI Taxonomy" id="257310"/>
    <lineage>
        <taxon>Bacteria</taxon>
        <taxon>Pseudomonadati</taxon>
        <taxon>Pseudomonadota</taxon>
        <taxon>Betaproteobacteria</taxon>
        <taxon>Burkholderiales</taxon>
        <taxon>Alcaligenaceae</taxon>
        <taxon>Bordetella</taxon>
    </lineage>
</organism>
<proteinExistence type="inferred from homology"/>
<dbReference type="EC" id="4.1.1.98" evidence="1"/>
<dbReference type="EMBL" id="BX640441">
    <property type="protein sequence ID" value="CAE31870.1"/>
    <property type="molecule type" value="Genomic_DNA"/>
</dbReference>
<dbReference type="RefSeq" id="WP_003809435.1">
    <property type="nucleotide sequence ID" value="NC_002927.3"/>
</dbReference>
<dbReference type="SMR" id="Q7WML9"/>
<dbReference type="KEGG" id="bbr:BB1372"/>
<dbReference type="eggNOG" id="COG0043">
    <property type="taxonomic scope" value="Bacteria"/>
</dbReference>
<dbReference type="HOGENOM" id="CLU_023348_4_1_4"/>
<dbReference type="UniPathway" id="UPA00232"/>
<dbReference type="Proteomes" id="UP000001027">
    <property type="component" value="Chromosome"/>
</dbReference>
<dbReference type="GO" id="GO:0005829">
    <property type="term" value="C:cytosol"/>
    <property type="evidence" value="ECO:0007669"/>
    <property type="project" value="TreeGrafter"/>
</dbReference>
<dbReference type="GO" id="GO:0005886">
    <property type="term" value="C:plasma membrane"/>
    <property type="evidence" value="ECO:0007669"/>
    <property type="project" value="UniProtKB-SubCell"/>
</dbReference>
<dbReference type="GO" id="GO:0008694">
    <property type="term" value="F:3-octaprenyl-4-hydroxybenzoate carboxy-lyase activity"/>
    <property type="evidence" value="ECO:0007669"/>
    <property type="project" value="UniProtKB-UniRule"/>
</dbReference>
<dbReference type="GO" id="GO:0046872">
    <property type="term" value="F:metal ion binding"/>
    <property type="evidence" value="ECO:0007669"/>
    <property type="project" value="UniProtKB-KW"/>
</dbReference>
<dbReference type="GO" id="GO:0006744">
    <property type="term" value="P:ubiquinone biosynthetic process"/>
    <property type="evidence" value="ECO:0007669"/>
    <property type="project" value="UniProtKB-UniRule"/>
</dbReference>
<dbReference type="FunFam" id="1.20.5.570:FF:000001">
    <property type="entry name" value="3-octaprenyl-4-hydroxybenzoate carboxy-lyase"/>
    <property type="match status" value="1"/>
</dbReference>
<dbReference type="FunFam" id="3.40.1670.10:FF:000001">
    <property type="entry name" value="3-octaprenyl-4-hydroxybenzoate carboxy-lyase"/>
    <property type="match status" value="1"/>
</dbReference>
<dbReference type="Gene3D" id="1.20.5.570">
    <property type="entry name" value="Single helix bin"/>
    <property type="match status" value="1"/>
</dbReference>
<dbReference type="Gene3D" id="3.40.1670.10">
    <property type="entry name" value="UbiD C-terminal domain-like"/>
    <property type="match status" value="1"/>
</dbReference>
<dbReference type="HAMAP" id="MF_01636">
    <property type="entry name" value="UbiD"/>
    <property type="match status" value="1"/>
</dbReference>
<dbReference type="InterPro" id="IPR002830">
    <property type="entry name" value="UbiD"/>
</dbReference>
<dbReference type="InterPro" id="IPR049381">
    <property type="entry name" value="UbiD-like_C"/>
</dbReference>
<dbReference type="InterPro" id="IPR049383">
    <property type="entry name" value="UbiD-like_N"/>
</dbReference>
<dbReference type="InterPro" id="IPR023677">
    <property type="entry name" value="UbiD_bacteria"/>
</dbReference>
<dbReference type="InterPro" id="IPR048304">
    <property type="entry name" value="UbiD_Rift_dom"/>
</dbReference>
<dbReference type="NCBIfam" id="TIGR00148">
    <property type="entry name" value="UbiD family decarboxylase"/>
    <property type="match status" value="2"/>
</dbReference>
<dbReference type="PANTHER" id="PTHR30108">
    <property type="entry name" value="3-OCTAPRENYL-4-HYDROXYBENZOATE CARBOXY-LYASE-RELATED"/>
    <property type="match status" value="1"/>
</dbReference>
<dbReference type="PANTHER" id="PTHR30108:SF17">
    <property type="entry name" value="FERULIC ACID DECARBOXYLASE 1"/>
    <property type="match status" value="1"/>
</dbReference>
<dbReference type="Pfam" id="PF01977">
    <property type="entry name" value="UbiD"/>
    <property type="match status" value="1"/>
</dbReference>
<dbReference type="Pfam" id="PF20696">
    <property type="entry name" value="UbiD_C"/>
    <property type="match status" value="1"/>
</dbReference>
<dbReference type="Pfam" id="PF20695">
    <property type="entry name" value="UbiD_N"/>
    <property type="match status" value="1"/>
</dbReference>
<dbReference type="SUPFAM" id="SSF50475">
    <property type="entry name" value="FMN-binding split barrel"/>
    <property type="match status" value="1"/>
</dbReference>
<dbReference type="SUPFAM" id="SSF143968">
    <property type="entry name" value="UbiD C-terminal domain-like"/>
    <property type="match status" value="1"/>
</dbReference>
<reference key="1">
    <citation type="journal article" date="2003" name="Nat. Genet.">
        <title>Comparative analysis of the genome sequences of Bordetella pertussis, Bordetella parapertussis and Bordetella bronchiseptica.</title>
        <authorList>
            <person name="Parkhill J."/>
            <person name="Sebaihia M."/>
            <person name="Preston A."/>
            <person name="Murphy L.D."/>
            <person name="Thomson N.R."/>
            <person name="Harris D.E."/>
            <person name="Holden M.T.G."/>
            <person name="Churcher C.M."/>
            <person name="Bentley S.D."/>
            <person name="Mungall K.L."/>
            <person name="Cerdeno-Tarraga A.-M."/>
            <person name="Temple L."/>
            <person name="James K.D."/>
            <person name="Harris B."/>
            <person name="Quail M.A."/>
            <person name="Achtman M."/>
            <person name="Atkin R."/>
            <person name="Baker S."/>
            <person name="Basham D."/>
            <person name="Bason N."/>
            <person name="Cherevach I."/>
            <person name="Chillingworth T."/>
            <person name="Collins M."/>
            <person name="Cronin A."/>
            <person name="Davis P."/>
            <person name="Doggett J."/>
            <person name="Feltwell T."/>
            <person name="Goble A."/>
            <person name="Hamlin N."/>
            <person name="Hauser H."/>
            <person name="Holroyd S."/>
            <person name="Jagels K."/>
            <person name="Leather S."/>
            <person name="Moule S."/>
            <person name="Norberczak H."/>
            <person name="O'Neil S."/>
            <person name="Ormond D."/>
            <person name="Price C."/>
            <person name="Rabbinowitsch E."/>
            <person name="Rutter S."/>
            <person name="Sanders M."/>
            <person name="Saunders D."/>
            <person name="Seeger K."/>
            <person name="Sharp S."/>
            <person name="Simmonds M."/>
            <person name="Skelton J."/>
            <person name="Squares R."/>
            <person name="Squares S."/>
            <person name="Stevens K."/>
            <person name="Unwin L."/>
            <person name="Whitehead S."/>
            <person name="Barrell B.G."/>
            <person name="Maskell D.J."/>
        </authorList>
    </citation>
    <scope>NUCLEOTIDE SEQUENCE [LARGE SCALE GENOMIC DNA]</scope>
    <source>
        <strain>ATCC BAA-588 / NCTC 13252 / RB50</strain>
    </source>
</reference>
<evidence type="ECO:0000255" key="1">
    <source>
        <dbReference type="HAMAP-Rule" id="MF_01636"/>
    </source>
</evidence>
<name>UBID_BORBR</name>
<accession>Q7WML9</accession>